<gene>
    <name type="primary">CCMB</name>
    <name type="synonym">ABCI2</name>
    <name type="synonym">CCB2</name>
    <name type="synonym">CCB206</name>
    <name type="ordered locus">AtMg00110</name>
</gene>
<geneLocation type="mitochondrion"/>
<comment type="function">
    <text>May be involved in the export of heme to the mitochondrion for the biogenesis of c-type cytochromes.</text>
</comment>
<comment type="subcellular location">
    <subcellularLocation>
        <location evidence="4">Mitochondrion membrane</location>
        <topology evidence="4">Multi-pass membrane protein</topology>
    </subcellularLocation>
</comment>
<comment type="RNA editing">
    <location>
        <position position="6" evidence="2 3"/>
    </location>
    <location>
        <position position="10" evidence="2 3"/>
    </location>
    <location>
        <position position="24" evidence="2 3"/>
    </location>
    <location>
        <position position="27" evidence="2 3"/>
    </location>
    <location>
        <position position="43" evidence="2 3"/>
    </location>
    <location>
        <position position="46" evidence="2 3"/>
    </location>
    <location>
        <position position="50" evidence="2 3"/>
    </location>
    <location>
        <position position="52" evidence="2 3"/>
    </location>
    <location>
        <position position="54" evidence="2 3"/>
    </location>
    <location>
        <position position="55" evidence="2 3"/>
    </location>
    <location>
        <position position="58" evidence="2 3"/>
    </location>
    <location>
        <position position="60" evidence="2 3"/>
    </location>
    <location>
        <position position="61" evidence="2 3"/>
    </location>
    <location>
        <position position="63" evidence="2 3"/>
    </location>
    <location>
        <position position="65" evidence="2 3"/>
    </location>
    <location>
        <position position="96" evidence="2 3"/>
    </location>
    <location>
        <position position="102" evidence="2 3"/>
    </location>
    <location>
        <position position="113" evidence="2 3"/>
    </location>
    <location>
        <position position="123" evidence="2 3"/>
    </location>
    <location>
        <position position="127" evidence="2 3"/>
    </location>
    <location>
        <position position="142" evidence="2 3"/>
    </location>
    <location>
        <position position="143" evidence="2 3"/>
    </location>
    <location>
        <position position="159" evidence="2 3"/>
    </location>
    <location>
        <position position="162" evidence="2 3"/>
    </location>
    <location>
        <position position="171" evidence="2 3"/>
    </location>
    <location>
        <position position="172" evidence="2 3"/>
    </location>
    <location>
        <position position="184" evidence="2 3"/>
    </location>
    <location>
        <position position="185" evidence="2 3"/>
    </location>
    <location>
        <position position="189" evidence="2 3"/>
    </location>
    <location>
        <position position="190" evidence="2 3"/>
    </location>
</comment>
<comment type="similarity">
    <text evidence="4">Belongs to the CcmB/CycW/HelB family.</text>
</comment>
<comment type="caution">
    <text evidence="5">Was originally (PubMed:18299247) thought to belong to the ABC transporter family. Lacks the conserved ABC domain, which is one of the features of the ABC transporter family.</text>
</comment>
<feature type="chain" id="PRO_0000201549" description="Putative cytochrome c biogenesis ccmB-like mitochondrial protein">
    <location>
        <begin position="1"/>
        <end position="206"/>
    </location>
</feature>
<feature type="transmembrane region" description="Helical" evidence="1">
    <location>
        <begin position="18"/>
        <end position="38"/>
    </location>
</feature>
<feature type="transmembrane region" description="Helical" evidence="1">
    <location>
        <begin position="45"/>
        <end position="65"/>
    </location>
</feature>
<feature type="transmembrane region" description="Helical" evidence="1">
    <location>
        <begin position="87"/>
        <end position="107"/>
    </location>
</feature>
<feature type="transmembrane region" description="Helical" evidence="1">
    <location>
        <begin position="126"/>
        <end position="146"/>
    </location>
</feature>
<feature type="transmembrane region" description="Helical" evidence="1">
    <location>
        <begin position="182"/>
        <end position="202"/>
    </location>
</feature>
<feature type="sequence conflict" description="In Ref. 1; CAA69756." evidence="4" ref="1">
    <original>L</original>
    <variation>S</variation>
    <location>
        <position position="156"/>
    </location>
</feature>
<feature type="sequence conflict" description="In Ref. 1; CAA69756." evidence="4" ref="1">
    <original>L</original>
    <variation>S</variation>
    <location>
        <position position="199"/>
    </location>
</feature>
<dbReference type="EMBL" id="Y08501">
    <property type="protein sequence ID" value="CAA69756.3"/>
    <property type="status" value="ALT_SEQ"/>
    <property type="molecule type" value="Genomic_DNA"/>
</dbReference>
<dbReference type="EMBL" id="BK010421">
    <property type="protein sequence ID" value="DAB41496.2"/>
    <property type="molecule type" value="Genomic_DNA"/>
</dbReference>
<dbReference type="RefSeq" id="NP_085482.1">
    <property type="nucleotide sequence ID" value="NC_001284.2"/>
</dbReference>
<dbReference type="SMR" id="P93280"/>
<dbReference type="BioGRID" id="6">
    <property type="interactions" value="1"/>
</dbReference>
<dbReference type="IntAct" id="P93280">
    <property type="interactions" value="1"/>
</dbReference>
<dbReference type="STRING" id="3702.A0A2P2CLF2"/>
<dbReference type="TCDB" id="3.A.1.107.2">
    <property type="family name" value="the atp-binding cassette (abc) superfamily"/>
</dbReference>
<dbReference type="PeptideAtlas" id="P93280"/>
<dbReference type="Araport" id="ATMG00110"/>
<dbReference type="TAIR" id="ATMG00110">
    <property type="gene designation" value="ABCI2"/>
</dbReference>
<dbReference type="InParanoid" id="P93280"/>
<dbReference type="PRO" id="PR:P93280"/>
<dbReference type="Proteomes" id="UP000006548">
    <property type="component" value="Mitochondrion MT"/>
</dbReference>
<dbReference type="ExpressionAtlas" id="P93280">
    <property type="expression patterns" value="baseline and differential"/>
</dbReference>
<dbReference type="GO" id="GO:0031966">
    <property type="term" value="C:mitochondrial membrane"/>
    <property type="evidence" value="ECO:0007669"/>
    <property type="project" value="UniProtKB-SubCell"/>
</dbReference>
<dbReference type="GO" id="GO:0015232">
    <property type="term" value="F:heme transmembrane transporter activity"/>
    <property type="evidence" value="ECO:0007669"/>
    <property type="project" value="InterPro"/>
</dbReference>
<dbReference type="GO" id="GO:1903607">
    <property type="term" value="P:cytochrome c biosynthetic process"/>
    <property type="evidence" value="ECO:0000318"/>
    <property type="project" value="GO_Central"/>
</dbReference>
<dbReference type="GO" id="GO:0017004">
    <property type="term" value="P:cytochrome complex assembly"/>
    <property type="evidence" value="ECO:0007669"/>
    <property type="project" value="UniProtKB-KW"/>
</dbReference>
<dbReference type="InterPro" id="IPR003544">
    <property type="entry name" value="Cyt_c_biogenesis_CcmB"/>
</dbReference>
<dbReference type="PANTHER" id="PTHR30070:SF1">
    <property type="entry name" value="CYTOCHROME C BIOGENESIS B-RELATED"/>
    <property type="match status" value="1"/>
</dbReference>
<dbReference type="PANTHER" id="PTHR30070">
    <property type="entry name" value="HEME EXPORTER PROTEIN B"/>
    <property type="match status" value="1"/>
</dbReference>
<dbReference type="Pfam" id="PF03379">
    <property type="entry name" value="CcmB"/>
    <property type="match status" value="1"/>
</dbReference>
<dbReference type="PRINTS" id="PR01414">
    <property type="entry name" value="CCMBBIOGNSIS"/>
</dbReference>
<protein>
    <recommendedName>
        <fullName>Putative cytochrome c biogenesis ccmB-like mitochondrial protein</fullName>
    </recommendedName>
    <alternativeName>
        <fullName>ABC transporter I family member 2</fullName>
        <shortName>ABC transporter ABCI.2</shortName>
        <shortName>AtABCI2</shortName>
    </alternativeName>
</protein>
<accession>P93280</accession>
<accession>A0A2P2CLF2</accession>
<reference key="1">
    <citation type="journal article" date="1997" name="Nat. Genet.">
        <title>The mitochondrial genome of Arabidopsis thaliana contains 57 genes in 366,924 nucleotides.</title>
        <authorList>
            <person name="Unseld M."/>
            <person name="Marienfeld J.R."/>
            <person name="Brandt P."/>
            <person name="Brennicke A."/>
        </authorList>
    </citation>
    <scope>NUCLEOTIDE SEQUENCE [LARGE SCALE GENOMIC DNA]</scope>
    <source>
        <strain>cv. C24</strain>
    </source>
</reference>
<reference key="2">
    <citation type="journal article" date="1999" name="Proc. Natl. Acad. Sci. U.S.A.">
        <title>RNA editing in Arabidopsis mitochondria effects 441 C to U changes in ORFs.</title>
        <authorList>
            <person name="Giege P."/>
            <person name="Brennicke A."/>
        </authorList>
    </citation>
    <scope>NUCLEOTIDE SEQUENCE [GENOMIC DNA]</scope>
    <scope>RNA EDITING</scope>
</reference>
<reference key="3">
    <citation type="journal article" date="2018" name="Plant Cell">
        <title>Correction of persistent errors in Arabidopsis reference mitochondrial genomes.</title>
        <authorList>
            <person name="Sloan D.B."/>
            <person name="Wu Z."/>
            <person name="Sharbrough J."/>
        </authorList>
    </citation>
    <scope>NUCLEOTIDE SEQUENCE [LARGE SCALE GENOMIC DNA]</scope>
    <scope>RNA EDITING</scope>
    <source>
        <strain>cv. Columbia</strain>
    </source>
</reference>
<reference key="4">
    <citation type="journal article" date="2008" name="Trends Plant Sci.">
        <title>Plant ABC proteins - a unified nomenclature and updated inventory.</title>
        <authorList>
            <person name="Verrier P.J."/>
            <person name="Bird D."/>
            <person name="Burla B."/>
            <person name="Dassa E."/>
            <person name="Forestier C."/>
            <person name="Geisler M."/>
            <person name="Klein M."/>
            <person name="Kolukisaoglu H.U."/>
            <person name="Lee Y."/>
            <person name="Martinoia E."/>
            <person name="Murphy A."/>
            <person name="Rea P.A."/>
            <person name="Samuels L."/>
            <person name="Schulz B."/>
            <person name="Spalding E.J."/>
            <person name="Yazaki K."/>
            <person name="Theodoulou F.L."/>
        </authorList>
    </citation>
    <scope>GENE FAMILY</scope>
    <scope>NOMENCLATURE</scope>
</reference>
<sequence>MRRLFLELYYKLIFSSTPITSFSLFLLYIVVTPLMLGFEKDFLCHFHLGLIWISLLFSFLSAPFFRNEKEDGTLELYYLSTYCLPKILLLQLVGHWVIQISCVFCGFPMLQLLYQFGRSGMDWLNILLGSLVLTLLCGIHSCLALGITSSSGWNSLQNLTTLPTLLPLTVFCTSIETEWFHVLLLIGYFFLFVSLFPILVSISLQD</sequence>
<organism>
    <name type="scientific">Arabidopsis thaliana</name>
    <name type="common">Mouse-ear cress</name>
    <dbReference type="NCBI Taxonomy" id="3702"/>
    <lineage>
        <taxon>Eukaryota</taxon>
        <taxon>Viridiplantae</taxon>
        <taxon>Streptophyta</taxon>
        <taxon>Embryophyta</taxon>
        <taxon>Tracheophyta</taxon>
        <taxon>Spermatophyta</taxon>
        <taxon>Magnoliopsida</taxon>
        <taxon>eudicotyledons</taxon>
        <taxon>Gunneridae</taxon>
        <taxon>Pentapetalae</taxon>
        <taxon>rosids</taxon>
        <taxon>malvids</taxon>
        <taxon>Brassicales</taxon>
        <taxon>Brassicaceae</taxon>
        <taxon>Camelineae</taxon>
        <taxon>Arabidopsis</taxon>
    </lineage>
</organism>
<name>CCMB_ARATH</name>
<keyword id="KW-0201">Cytochrome c-type biogenesis</keyword>
<keyword id="KW-0472">Membrane</keyword>
<keyword id="KW-0496">Mitochondrion</keyword>
<keyword id="KW-1185">Reference proteome</keyword>
<keyword id="KW-0691">RNA editing</keyword>
<keyword id="KW-0812">Transmembrane</keyword>
<keyword id="KW-1133">Transmembrane helix</keyword>
<keyword id="KW-0813">Transport</keyword>
<proteinExistence type="evidence at transcript level"/>
<evidence type="ECO:0000255" key="1"/>
<evidence type="ECO:0000269" key="2">
    <source>
    </source>
</evidence>
<evidence type="ECO:0000269" key="3">
    <source>
    </source>
</evidence>
<evidence type="ECO:0000305" key="4"/>
<evidence type="ECO:0000305" key="5">
    <source>
    </source>
</evidence>